<name>UHPA_SALTY</name>
<sequence>MITVALIDDHLIVRSGFAQLLGLEPDLQVVAEFGSGREALAGLPGRGVQVCICDISMPDISGLELLSQLPKGMATIVLSVHDSPALVEQALNAGARGFLSKRCSPDELIAAVHTVATGGCYLTPDIAVKLAAGRQDPLTKRERQVAEKLAQGMAVKEIAAELGLSPKTVHVHRANLLEKLGVSNDVELAHRMFDGW</sequence>
<protein>
    <recommendedName>
        <fullName evidence="1">Transcriptional regulatory protein UhpA</fullName>
    </recommendedName>
</protein>
<reference key="1">
    <citation type="journal article" date="1992" name="J. Bacteriol.">
        <title>Structure and function of the uhp genes for the sugar phosphate transport system in Escherichia coli and Salmonella typhimurium.</title>
        <authorList>
            <person name="Island M.D."/>
            <person name="Wei B.-Y."/>
            <person name="Kadner R.J."/>
        </authorList>
    </citation>
    <scope>NUCLEOTIDE SEQUENCE [GENOMIC DNA]</scope>
    <source>
        <strain>LT2</strain>
    </source>
</reference>
<reference key="2">
    <citation type="journal article" date="2001" name="Nature">
        <title>Complete genome sequence of Salmonella enterica serovar Typhimurium LT2.</title>
        <authorList>
            <person name="McClelland M."/>
            <person name="Sanderson K.E."/>
            <person name="Spieth J."/>
            <person name="Clifton S.W."/>
            <person name="Latreille P."/>
            <person name="Courtney L."/>
            <person name="Porwollik S."/>
            <person name="Ali J."/>
            <person name="Dante M."/>
            <person name="Du F."/>
            <person name="Hou S."/>
            <person name="Layman D."/>
            <person name="Leonard S."/>
            <person name="Nguyen C."/>
            <person name="Scott K."/>
            <person name="Holmes A."/>
            <person name="Grewal N."/>
            <person name="Mulvaney E."/>
            <person name="Ryan E."/>
            <person name="Sun H."/>
            <person name="Florea L."/>
            <person name="Miller W."/>
            <person name="Stoneking T."/>
            <person name="Nhan M."/>
            <person name="Waterston R."/>
            <person name="Wilson R.K."/>
        </authorList>
    </citation>
    <scope>NUCLEOTIDE SEQUENCE [LARGE SCALE GENOMIC DNA]</scope>
    <source>
        <strain>LT2 / SGSC1412 / ATCC 700720</strain>
    </source>
</reference>
<proteinExistence type="inferred from homology"/>
<evidence type="ECO:0000250" key="1">
    <source>
        <dbReference type="UniProtKB" id="P0AGA6"/>
    </source>
</evidence>
<evidence type="ECO:0000255" key="2">
    <source>
        <dbReference type="PROSITE-ProRule" id="PRU00169"/>
    </source>
</evidence>
<evidence type="ECO:0000255" key="3">
    <source>
        <dbReference type="PROSITE-ProRule" id="PRU00411"/>
    </source>
</evidence>
<evidence type="ECO:0000305" key="4"/>
<comment type="function">
    <text evidence="1">Part of the UhpABC signaling cascade that controls the expression of the hexose phosphate transporter UhpT. Activates the transcription of the uhpT gene. Acts by binding specifically to the uhpT promoter region.</text>
</comment>
<comment type="subcellular location">
    <subcellularLocation>
        <location evidence="4">Cytoplasm</location>
    </subcellularLocation>
</comment>
<comment type="PTM">
    <text evidence="1">Phosphorylated and dephosphorylated by UhpB.</text>
</comment>
<dbReference type="EMBL" id="M89480">
    <property type="protein sequence ID" value="AAA27243.1"/>
    <property type="molecule type" value="Genomic_DNA"/>
</dbReference>
<dbReference type="EMBL" id="AE006468">
    <property type="protein sequence ID" value="AAL22648.1"/>
    <property type="molecule type" value="Genomic_DNA"/>
</dbReference>
<dbReference type="PIR" id="A41853">
    <property type="entry name" value="A41853"/>
</dbReference>
<dbReference type="RefSeq" id="NP_462689.1">
    <property type="nucleotide sequence ID" value="NC_003197.2"/>
</dbReference>
<dbReference type="RefSeq" id="WP_000633676.1">
    <property type="nucleotide sequence ID" value="NC_003197.2"/>
</dbReference>
<dbReference type="SMR" id="P27667"/>
<dbReference type="STRING" id="99287.STM3790"/>
<dbReference type="PaxDb" id="99287-STM3790"/>
<dbReference type="GeneID" id="1255314"/>
<dbReference type="KEGG" id="stm:STM3790"/>
<dbReference type="PATRIC" id="fig|99287.12.peg.4010"/>
<dbReference type="HOGENOM" id="CLU_000445_90_1_6"/>
<dbReference type="OMA" id="DHPMWRD"/>
<dbReference type="PhylomeDB" id="P27667"/>
<dbReference type="BioCyc" id="SENT99287:STM3790-MONOMER"/>
<dbReference type="Proteomes" id="UP000001014">
    <property type="component" value="Chromosome"/>
</dbReference>
<dbReference type="GO" id="GO:0005737">
    <property type="term" value="C:cytoplasm"/>
    <property type="evidence" value="ECO:0007669"/>
    <property type="project" value="UniProtKB-SubCell"/>
</dbReference>
<dbReference type="GO" id="GO:0003677">
    <property type="term" value="F:DNA binding"/>
    <property type="evidence" value="ECO:0007669"/>
    <property type="project" value="UniProtKB-KW"/>
</dbReference>
<dbReference type="GO" id="GO:0000160">
    <property type="term" value="P:phosphorelay signal transduction system"/>
    <property type="evidence" value="ECO:0007669"/>
    <property type="project" value="UniProtKB-KW"/>
</dbReference>
<dbReference type="GO" id="GO:0006355">
    <property type="term" value="P:regulation of DNA-templated transcription"/>
    <property type="evidence" value="ECO:0007669"/>
    <property type="project" value="InterPro"/>
</dbReference>
<dbReference type="CDD" id="cd06170">
    <property type="entry name" value="LuxR_C_like"/>
    <property type="match status" value="1"/>
</dbReference>
<dbReference type="CDD" id="cd17535">
    <property type="entry name" value="REC_NarL-like"/>
    <property type="match status" value="1"/>
</dbReference>
<dbReference type="FunFam" id="3.40.50.2300:FF:000040">
    <property type="entry name" value="DNA-binding transcriptional activator UhpA"/>
    <property type="match status" value="1"/>
</dbReference>
<dbReference type="Gene3D" id="3.40.50.2300">
    <property type="match status" value="1"/>
</dbReference>
<dbReference type="InterPro" id="IPR011006">
    <property type="entry name" value="CheY-like_superfamily"/>
</dbReference>
<dbReference type="InterPro" id="IPR016032">
    <property type="entry name" value="Sig_transdc_resp-reg_C-effctor"/>
</dbReference>
<dbReference type="InterPro" id="IPR001789">
    <property type="entry name" value="Sig_transdc_resp-reg_receiver"/>
</dbReference>
<dbReference type="InterPro" id="IPR000792">
    <property type="entry name" value="Tscrpt_reg_LuxR_C"/>
</dbReference>
<dbReference type="InterPro" id="IPR039420">
    <property type="entry name" value="WalR-like"/>
</dbReference>
<dbReference type="NCBIfam" id="NF007685">
    <property type="entry name" value="PRK10360.1"/>
    <property type="match status" value="1"/>
</dbReference>
<dbReference type="PANTHER" id="PTHR43214:SF22">
    <property type="entry name" value="TRANSCRIPTIONAL REGULATORY PROTEIN UHPA"/>
    <property type="match status" value="1"/>
</dbReference>
<dbReference type="PANTHER" id="PTHR43214">
    <property type="entry name" value="TWO-COMPONENT RESPONSE REGULATOR"/>
    <property type="match status" value="1"/>
</dbReference>
<dbReference type="Pfam" id="PF00196">
    <property type="entry name" value="GerE"/>
    <property type="match status" value="1"/>
</dbReference>
<dbReference type="Pfam" id="PF00072">
    <property type="entry name" value="Response_reg"/>
    <property type="match status" value="1"/>
</dbReference>
<dbReference type="PRINTS" id="PR00038">
    <property type="entry name" value="HTHLUXR"/>
</dbReference>
<dbReference type="SMART" id="SM00421">
    <property type="entry name" value="HTH_LUXR"/>
    <property type="match status" value="1"/>
</dbReference>
<dbReference type="SMART" id="SM00448">
    <property type="entry name" value="REC"/>
    <property type="match status" value="1"/>
</dbReference>
<dbReference type="SUPFAM" id="SSF46894">
    <property type="entry name" value="C-terminal effector domain of the bipartite response regulators"/>
    <property type="match status" value="1"/>
</dbReference>
<dbReference type="SUPFAM" id="SSF52172">
    <property type="entry name" value="CheY-like"/>
    <property type="match status" value="1"/>
</dbReference>
<dbReference type="PROSITE" id="PS00622">
    <property type="entry name" value="HTH_LUXR_1"/>
    <property type="match status" value="1"/>
</dbReference>
<dbReference type="PROSITE" id="PS50043">
    <property type="entry name" value="HTH_LUXR_2"/>
    <property type="match status" value="1"/>
</dbReference>
<dbReference type="PROSITE" id="PS50110">
    <property type="entry name" value="RESPONSE_REGULATORY"/>
    <property type="match status" value="1"/>
</dbReference>
<keyword id="KW-0010">Activator</keyword>
<keyword id="KW-0963">Cytoplasm</keyword>
<keyword id="KW-0238">DNA-binding</keyword>
<keyword id="KW-0597">Phosphoprotein</keyword>
<keyword id="KW-1185">Reference proteome</keyword>
<keyword id="KW-0804">Transcription</keyword>
<keyword id="KW-0805">Transcription regulation</keyword>
<keyword id="KW-0902">Two-component regulatory system</keyword>
<accession>P27667</accession>
<gene>
    <name type="primary">uhpA</name>
    <name type="ordered locus">STM3790</name>
</gene>
<feature type="chain" id="PRO_0000081260" description="Transcriptional regulatory protein UhpA">
    <location>
        <begin position="1"/>
        <end position="196"/>
    </location>
</feature>
<feature type="domain" description="Response regulatory" evidence="2">
    <location>
        <begin position="3"/>
        <end position="116"/>
    </location>
</feature>
<feature type="domain" description="HTH luxR-type" evidence="3">
    <location>
        <begin position="131"/>
        <end position="196"/>
    </location>
</feature>
<feature type="DNA-binding region" description="H-T-H motif" evidence="3">
    <location>
        <begin position="155"/>
        <end position="174"/>
    </location>
</feature>
<feature type="modified residue" description="4-aspartylphosphate" evidence="2">
    <location>
        <position position="54"/>
    </location>
</feature>
<organism>
    <name type="scientific">Salmonella typhimurium (strain LT2 / SGSC1412 / ATCC 700720)</name>
    <dbReference type="NCBI Taxonomy" id="99287"/>
    <lineage>
        <taxon>Bacteria</taxon>
        <taxon>Pseudomonadati</taxon>
        <taxon>Pseudomonadota</taxon>
        <taxon>Gammaproteobacteria</taxon>
        <taxon>Enterobacterales</taxon>
        <taxon>Enterobacteriaceae</taxon>
        <taxon>Salmonella</taxon>
    </lineage>
</organism>